<comment type="function">
    <text evidence="2">Serine/threonine protein kinase; part of the subtelomeric hrmA-associated cluster (HAC) containing genes that alter the hyphal surface (such as reduced total chitin or increased beta-glucan exposure) and perturb inter-hyphal interactions within the developing biofilms, resulting in a loss of vertically aligned polarized growing filaments (PubMed:31548684). Consequently, this hypoxia-typic morphotype (called H-MORPH) with altered biofilm architecture leads to increased hypoxia fitness, increased host inflammation, rapid disease progression, and mortality in a murine model of invasive aspergillosis (PubMed:31548684).</text>
</comment>
<comment type="catalytic activity">
    <reaction evidence="4">
        <text>L-seryl-[protein] + ATP = O-phospho-L-seryl-[protein] + ADP + H(+)</text>
        <dbReference type="Rhea" id="RHEA:17989"/>
        <dbReference type="Rhea" id="RHEA-COMP:9863"/>
        <dbReference type="Rhea" id="RHEA-COMP:11604"/>
        <dbReference type="ChEBI" id="CHEBI:15378"/>
        <dbReference type="ChEBI" id="CHEBI:29999"/>
        <dbReference type="ChEBI" id="CHEBI:30616"/>
        <dbReference type="ChEBI" id="CHEBI:83421"/>
        <dbReference type="ChEBI" id="CHEBI:456216"/>
        <dbReference type="EC" id="2.7.11.1"/>
    </reaction>
</comment>
<comment type="catalytic activity">
    <reaction evidence="4">
        <text>L-threonyl-[protein] + ATP = O-phospho-L-threonyl-[protein] + ADP + H(+)</text>
        <dbReference type="Rhea" id="RHEA:46608"/>
        <dbReference type="Rhea" id="RHEA-COMP:11060"/>
        <dbReference type="Rhea" id="RHEA-COMP:11605"/>
        <dbReference type="ChEBI" id="CHEBI:15378"/>
        <dbReference type="ChEBI" id="CHEBI:30013"/>
        <dbReference type="ChEBI" id="CHEBI:30616"/>
        <dbReference type="ChEBI" id="CHEBI:61977"/>
        <dbReference type="ChEBI" id="CHEBI:456216"/>
        <dbReference type="EC" id="2.7.11.1"/>
    </reaction>
</comment>
<comment type="induction">
    <text evidence="2">Expression is regulated by the hypoxia responsive morphology factor A (hrmA).</text>
</comment>
<comment type="similarity">
    <text evidence="4">Belongs to the protein kinase superfamily. CMGC Ser/Thr protein kinase family.</text>
</comment>
<feature type="chain" id="PRO_0000460409" description="Serine/threonine protein kinase AFUA_5G14870">
    <location>
        <begin position="1"/>
        <end position="393"/>
    </location>
</feature>
<feature type="domain" description="Protein kinase" evidence="1">
    <location>
        <begin position="61"/>
        <end position="390"/>
    </location>
</feature>
<feature type="active site" description="Proton acceptor" evidence="1">
    <location>
        <position position="190"/>
    </location>
</feature>
<feature type="binding site" evidence="1">
    <location>
        <begin position="67"/>
        <end position="75"/>
    </location>
    <ligand>
        <name>ATP</name>
        <dbReference type="ChEBI" id="CHEBI:30616"/>
    </ligand>
</feature>
<feature type="binding site" evidence="1">
    <location>
        <position position="90"/>
    </location>
    <ligand>
        <name>ATP</name>
        <dbReference type="ChEBI" id="CHEBI:30616"/>
    </ligand>
</feature>
<dbReference type="EC" id="2.7.11.1" evidence="5"/>
<dbReference type="EMBL" id="AAHF01000003">
    <property type="protein sequence ID" value="EAL91132.1"/>
    <property type="molecule type" value="Genomic_DNA"/>
</dbReference>
<dbReference type="RefSeq" id="XP_753170.1">
    <property type="nucleotide sequence ID" value="XM_748077.1"/>
</dbReference>
<dbReference type="SMR" id="Q4WW94"/>
<dbReference type="EnsemblFungi" id="EAL91132">
    <property type="protein sequence ID" value="EAL91132"/>
    <property type="gene ID" value="AFUA_5G14870"/>
</dbReference>
<dbReference type="GeneID" id="3510953"/>
<dbReference type="KEGG" id="afm:AFUA_5G14870"/>
<dbReference type="VEuPathDB" id="FungiDB:Afu5g14870"/>
<dbReference type="eggNOG" id="KOG1290">
    <property type="taxonomic scope" value="Eukaryota"/>
</dbReference>
<dbReference type="HOGENOM" id="CLU_000288_81_1_1"/>
<dbReference type="InParanoid" id="Q4WW94"/>
<dbReference type="OMA" id="WDLFEDH"/>
<dbReference type="OrthoDB" id="5979581at2759"/>
<dbReference type="Proteomes" id="UP000002530">
    <property type="component" value="Chromosome 5"/>
</dbReference>
<dbReference type="GO" id="GO:0005634">
    <property type="term" value="C:nucleus"/>
    <property type="evidence" value="ECO:0000318"/>
    <property type="project" value="GO_Central"/>
</dbReference>
<dbReference type="GO" id="GO:0005524">
    <property type="term" value="F:ATP binding"/>
    <property type="evidence" value="ECO:0007669"/>
    <property type="project" value="UniProtKB-KW"/>
</dbReference>
<dbReference type="GO" id="GO:0004674">
    <property type="term" value="F:protein serine/threonine kinase activity"/>
    <property type="evidence" value="ECO:0000318"/>
    <property type="project" value="GO_Central"/>
</dbReference>
<dbReference type="GO" id="GO:0007155">
    <property type="term" value="P:cell adhesion"/>
    <property type="evidence" value="ECO:0007669"/>
    <property type="project" value="UniProtKB-KW"/>
</dbReference>
<dbReference type="GO" id="GO:0043484">
    <property type="term" value="P:regulation of RNA splicing"/>
    <property type="evidence" value="ECO:0000318"/>
    <property type="project" value="GO_Central"/>
</dbReference>
<dbReference type="Gene3D" id="3.30.200.20">
    <property type="entry name" value="Phosphorylase Kinase, domain 1"/>
    <property type="match status" value="1"/>
</dbReference>
<dbReference type="Gene3D" id="1.10.510.10">
    <property type="entry name" value="Transferase(Phosphotransferase) domain 1"/>
    <property type="match status" value="1"/>
</dbReference>
<dbReference type="InterPro" id="IPR011009">
    <property type="entry name" value="Kinase-like_dom_sf"/>
</dbReference>
<dbReference type="InterPro" id="IPR000719">
    <property type="entry name" value="Prot_kinase_dom"/>
</dbReference>
<dbReference type="InterPro" id="IPR017441">
    <property type="entry name" value="Protein_kinase_ATP_BS"/>
</dbReference>
<dbReference type="InterPro" id="IPR051334">
    <property type="entry name" value="SRPK"/>
</dbReference>
<dbReference type="PANTHER" id="PTHR47634">
    <property type="entry name" value="PROTEIN KINASE DOMAIN-CONTAINING PROTEIN-RELATED"/>
    <property type="match status" value="1"/>
</dbReference>
<dbReference type="PANTHER" id="PTHR47634:SF9">
    <property type="entry name" value="PROTEIN KINASE DOMAIN-CONTAINING PROTEIN-RELATED"/>
    <property type="match status" value="1"/>
</dbReference>
<dbReference type="Pfam" id="PF00069">
    <property type="entry name" value="Pkinase"/>
    <property type="match status" value="2"/>
</dbReference>
<dbReference type="SMART" id="SM00220">
    <property type="entry name" value="S_TKc"/>
    <property type="match status" value="1"/>
</dbReference>
<dbReference type="SUPFAM" id="SSF56112">
    <property type="entry name" value="Protein kinase-like (PK-like)"/>
    <property type="match status" value="1"/>
</dbReference>
<dbReference type="PROSITE" id="PS00107">
    <property type="entry name" value="PROTEIN_KINASE_ATP"/>
    <property type="match status" value="1"/>
</dbReference>
<dbReference type="PROSITE" id="PS50011">
    <property type="entry name" value="PROTEIN_KINASE_DOM"/>
    <property type="match status" value="1"/>
</dbReference>
<protein>
    <recommendedName>
        <fullName evidence="3">Serine/threonine protein kinase AFUA_5G14870</fullName>
        <ecNumber evidence="5">2.7.11.1</ecNumber>
    </recommendedName>
    <alternativeName>
        <fullName evidence="3">Subtelomeric hrmA-associated cluster protein AFUA_5G14870</fullName>
    </alternativeName>
</protein>
<name>HAC2_ASPFU</name>
<evidence type="ECO:0000255" key="1">
    <source>
        <dbReference type="PROSITE-ProRule" id="PRU00159"/>
    </source>
</evidence>
<evidence type="ECO:0000269" key="2">
    <source>
    </source>
</evidence>
<evidence type="ECO:0000303" key="3">
    <source>
    </source>
</evidence>
<evidence type="ECO:0000305" key="4"/>
<evidence type="ECO:0000305" key="5">
    <source>
    </source>
</evidence>
<sequence length="393" mass="45160">MTPFHRLSRFFRQAPSPPRTPITSNFPILDSAVKIEEERMPAFDRGLFYPVKLGDVFRSRYQVLSKLGFGANSTVWFCRDLHQHRYIALKIYIRSSEVNREVQVLKHLSSVKTNHPGSSLVRKMIEEFEITGPSGSHQCIVYEPLLTSLLHFQATLKPQSLPEDLLKGALQQLLLALDYLHSEAHVIHTDDSIFREWDTSEEAEPSPRKVDSSHTIYKSRPFHRKKGWSGFGMPLLSDFGEARLGDVHDGSIQPDIYRAPEVILGMSWTSKVDIWNVGALIWDLFEDHHLFDGRGPNGDHSDAHLLAEMIAMLGPAPLNFLRKAPQSRKYWDSNGRWKGAIEVPQCSLEDSEEYLEGENKKMFMQFVRKMLRWDPEERQSAPELLTDPWLIAQ</sequence>
<reference key="1">
    <citation type="journal article" date="2005" name="Nature">
        <title>Genomic sequence of the pathogenic and allergenic filamentous fungus Aspergillus fumigatus.</title>
        <authorList>
            <person name="Nierman W.C."/>
            <person name="Pain A."/>
            <person name="Anderson M.J."/>
            <person name="Wortman J.R."/>
            <person name="Kim H.S."/>
            <person name="Arroyo J."/>
            <person name="Berriman M."/>
            <person name="Abe K."/>
            <person name="Archer D.B."/>
            <person name="Bermejo C."/>
            <person name="Bennett J.W."/>
            <person name="Bowyer P."/>
            <person name="Chen D."/>
            <person name="Collins M."/>
            <person name="Coulsen R."/>
            <person name="Davies R."/>
            <person name="Dyer P.S."/>
            <person name="Farman M.L."/>
            <person name="Fedorova N."/>
            <person name="Fedorova N.D."/>
            <person name="Feldblyum T.V."/>
            <person name="Fischer R."/>
            <person name="Fosker N."/>
            <person name="Fraser A."/>
            <person name="Garcia J.L."/>
            <person name="Garcia M.J."/>
            <person name="Goble A."/>
            <person name="Goldman G.H."/>
            <person name="Gomi K."/>
            <person name="Griffith-Jones S."/>
            <person name="Gwilliam R."/>
            <person name="Haas B.J."/>
            <person name="Haas H."/>
            <person name="Harris D.E."/>
            <person name="Horiuchi H."/>
            <person name="Huang J."/>
            <person name="Humphray S."/>
            <person name="Jimenez J."/>
            <person name="Keller N."/>
            <person name="Khouri H."/>
            <person name="Kitamoto K."/>
            <person name="Kobayashi T."/>
            <person name="Konzack S."/>
            <person name="Kulkarni R."/>
            <person name="Kumagai T."/>
            <person name="Lafton A."/>
            <person name="Latge J.-P."/>
            <person name="Li W."/>
            <person name="Lord A."/>
            <person name="Lu C."/>
            <person name="Majoros W.H."/>
            <person name="May G.S."/>
            <person name="Miller B.L."/>
            <person name="Mohamoud Y."/>
            <person name="Molina M."/>
            <person name="Monod M."/>
            <person name="Mouyna I."/>
            <person name="Mulligan S."/>
            <person name="Murphy L.D."/>
            <person name="O'Neil S."/>
            <person name="Paulsen I."/>
            <person name="Penalva M.A."/>
            <person name="Pertea M."/>
            <person name="Price C."/>
            <person name="Pritchard B.L."/>
            <person name="Quail M.A."/>
            <person name="Rabbinowitsch E."/>
            <person name="Rawlins N."/>
            <person name="Rajandream M.A."/>
            <person name="Reichard U."/>
            <person name="Renauld H."/>
            <person name="Robson G.D."/>
            <person name="Rodriguez de Cordoba S."/>
            <person name="Rodriguez-Pena J.M."/>
            <person name="Ronning C.M."/>
            <person name="Rutter S."/>
            <person name="Salzberg S.L."/>
            <person name="Sanchez M."/>
            <person name="Sanchez-Ferrero J.C."/>
            <person name="Saunders D."/>
            <person name="Seeger K."/>
            <person name="Squares R."/>
            <person name="Squares S."/>
            <person name="Takeuchi M."/>
            <person name="Tekaia F."/>
            <person name="Turner G."/>
            <person name="Vazquez de Aldana C.R."/>
            <person name="Weidman J."/>
            <person name="White O."/>
            <person name="Woodward J.R."/>
            <person name="Yu J.-H."/>
            <person name="Fraser C.M."/>
            <person name="Galagan J.E."/>
            <person name="Asai K."/>
            <person name="Machida M."/>
            <person name="Hall N."/>
            <person name="Barrell B.G."/>
            <person name="Denning D.W."/>
        </authorList>
    </citation>
    <scope>NUCLEOTIDE SEQUENCE [LARGE SCALE GENOMIC DNA]</scope>
    <source>
        <strain>ATCC MYA-4609 / CBS 101355 / FGSC A1100 / Af293</strain>
    </source>
</reference>
<reference key="2">
    <citation type="journal article" date="2019" name="Nat. Microbiol.">
        <title>Fungal biofilm morphology impacts hypoxia fitness and disease progression.</title>
        <authorList>
            <person name="Kowalski C.H."/>
            <person name="Kerkaert J.D."/>
            <person name="Liu K.W."/>
            <person name="Bond M.C."/>
            <person name="Hartmann R."/>
            <person name="Nadell C.D."/>
            <person name="Stajich J.E."/>
            <person name="Cramer R.A."/>
        </authorList>
    </citation>
    <scope>FUNCTION</scope>
    <scope>INDUCTION</scope>
</reference>
<proteinExistence type="evidence at transcript level"/>
<gene>
    <name type="ORF">AFUA_5G14870</name>
</gene>
<accession>Q4WW94</accession>
<organism>
    <name type="scientific">Aspergillus fumigatus (strain ATCC MYA-4609 / CBS 101355 / FGSC A1100 / Af293)</name>
    <name type="common">Neosartorya fumigata</name>
    <dbReference type="NCBI Taxonomy" id="330879"/>
    <lineage>
        <taxon>Eukaryota</taxon>
        <taxon>Fungi</taxon>
        <taxon>Dikarya</taxon>
        <taxon>Ascomycota</taxon>
        <taxon>Pezizomycotina</taxon>
        <taxon>Eurotiomycetes</taxon>
        <taxon>Eurotiomycetidae</taxon>
        <taxon>Eurotiales</taxon>
        <taxon>Aspergillaceae</taxon>
        <taxon>Aspergillus</taxon>
        <taxon>Aspergillus subgen. Fumigati</taxon>
    </lineage>
</organism>
<keyword id="KW-0067">ATP-binding</keyword>
<keyword id="KW-0130">Cell adhesion</keyword>
<keyword id="KW-0418">Kinase</keyword>
<keyword id="KW-0547">Nucleotide-binding</keyword>
<keyword id="KW-1185">Reference proteome</keyword>
<keyword id="KW-0723">Serine/threonine-protein kinase</keyword>
<keyword id="KW-0808">Transferase</keyword>
<keyword id="KW-0843">Virulence</keyword>